<protein>
    <recommendedName>
        <fullName evidence="1">Glycerol-3-phosphate acyltransferase</fullName>
    </recommendedName>
    <alternativeName>
        <fullName evidence="1">Acyl-PO4 G3P acyltransferase</fullName>
    </alternativeName>
    <alternativeName>
        <fullName evidence="1">Acyl-phosphate--glycerol-3-phosphate acyltransferase</fullName>
    </alternativeName>
    <alternativeName>
        <fullName evidence="1">G3P acyltransferase</fullName>
        <shortName evidence="1">GPAT</shortName>
        <ecNumber evidence="1">2.3.1.275</ecNumber>
    </alternativeName>
    <alternativeName>
        <fullName evidence="1">Lysophosphatidic acid synthase</fullName>
        <shortName evidence="1">LPA synthase</shortName>
    </alternativeName>
</protein>
<evidence type="ECO:0000255" key="1">
    <source>
        <dbReference type="HAMAP-Rule" id="MF_01043"/>
    </source>
</evidence>
<accession>B1YEC6</accession>
<proteinExistence type="inferred from homology"/>
<reference key="1">
    <citation type="submission" date="2008-04" db="EMBL/GenBank/DDBJ databases">
        <title>Complete sequence of chromosome of Exiguobacterium sibiricum 255-15.</title>
        <authorList>
            <consortium name="US DOE Joint Genome Institute"/>
            <person name="Copeland A."/>
            <person name="Lucas S."/>
            <person name="Lapidus A."/>
            <person name="Glavina del Rio T."/>
            <person name="Dalin E."/>
            <person name="Tice H."/>
            <person name="Bruce D."/>
            <person name="Goodwin L."/>
            <person name="Pitluck S."/>
            <person name="Kiss H."/>
            <person name="Chertkov O."/>
            <person name="Monk C."/>
            <person name="Brettin T."/>
            <person name="Detter J.C."/>
            <person name="Han C."/>
            <person name="Kuske C.R."/>
            <person name="Schmutz J."/>
            <person name="Larimer F."/>
            <person name="Land M."/>
            <person name="Hauser L."/>
            <person name="Kyrpides N."/>
            <person name="Mikhailova N."/>
            <person name="Vishnivetskaya T."/>
            <person name="Rodrigues D.F."/>
            <person name="Gilichinsky D."/>
            <person name="Tiedje J."/>
            <person name="Richardson P."/>
        </authorList>
    </citation>
    <scope>NUCLEOTIDE SEQUENCE [LARGE SCALE GENOMIC DNA]</scope>
    <source>
        <strain>DSM 17290 / CCUG 55495 / CIP 109462 / JCM 13490 / 255-15</strain>
    </source>
</reference>
<organism>
    <name type="scientific">Exiguobacterium sibiricum (strain DSM 17290 / CCUG 55495 / CIP 109462 / JCM 13490 / 255-15)</name>
    <dbReference type="NCBI Taxonomy" id="262543"/>
    <lineage>
        <taxon>Bacteria</taxon>
        <taxon>Bacillati</taxon>
        <taxon>Bacillota</taxon>
        <taxon>Bacilli</taxon>
        <taxon>Bacillales</taxon>
        <taxon>Bacillales Family XII. Incertae Sedis</taxon>
        <taxon>Exiguobacterium</taxon>
    </lineage>
</organism>
<name>PLSY_EXIS2</name>
<comment type="function">
    <text evidence="1">Catalyzes the transfer of an acyl group from acyl-phosphate (acyl-PO(4)) to glycerol-3-phosphate (G3P) to form lysophosphatidic acid (LPA). This enzyme utilizes acyl-phosphate as fatty acyl donor, but not acyl-CoA or acyl-ACP.</text>
</comment>
<comment type="catalytic activity">
    <reaction evidence="1">
        <text>an acyl phosphate + sn-glycerol 3-phosphate = a 1-acyl-sn-glycero-3-phosphate + phosphate</text>
        <dbReference type="Rhea" id="RHEA:34075"/>
        <dbReference type="ChEBI" id="CHEBI:43474"/>
        <dbReference type="ChEBI" id="CHEBI:57597"/>
        <dbReference type="ChEBI" id="CHEBI:57970"/>
        <dbReference type="ChEBI" id="CHEBI:59918"/>
        <dbReference type="EC" id="2.3.1.275"/>
    </reaction>
</comment>
<comment type="pathway">
    <text evidence="1">Lipid metabolism; phospholipid metabolism.</text>
</comment>
<comment type="subunit">
    <text evidence="1">Probably interacts with PlsX.</text>
</comment>
<comment type="subcellular location">
    <subcellularLocation>
        <location evidence="1">Cell membrane</location>
        <topology evidence="1">Multi-pass membrane protein</topology>
    </subcellularLocation>
</comment>
<comment type="similarity">
    <text evidence="1">Belongs to the PlsY family.</text>
</comment>
<dbReference type="EC" id="2.3.1.275" evidence="1"/>
<dbReference type="EMBL" id="CP001022">
    <property type="protein sequence ID" value="ACB60628.1"/>
    <property type="molecule type" value="Genomic_DNA"/>
</dbReference>
<dbReference type="RefSeq" id="WP_012370049.1">
    <property type="nucleotide sequence ID" value="NC_010556.1"/>
</dbReference>
<dbReference type="SMR" id="B1YEC6"/>
<dbReference type="STRING" id="262543.Exig_1149"/>
<dbReference type="KEGG" id="esi:Exig_1149"/>
<dbReference type="eggNOG" id="COG0344">
    <property type="taxonomic scope" value="Bacteria"/>
</dbReference>
<dbReference type="HOGENOM" id="CLU_081254_4_0_9"/>
<dbReference type="OrthoDB" id="9777124at2"/>
<dbReference type="UniPathway" id="UPA00085"/>
<dbReference type="Proteomes" id="UP000001681">
    <property type="component" value="Chromosome"/>
</dbReference>
<dbReference type="GO" id="GO:0005886">
    <property type="term" value="C:plasma membrane"/>
    <property type="evidence" value="ECO:0007669"/>
    <property type="project" value="UniProtKB-SubCell"/>
</dbReference>
<dbReference type="GO" id="GO:0043772">
    <property type="term" value="F:acyl-phosphate glycerol-3-phosphate acyltransferase activity"/>
    <property type="evidence" value="ECO:0007669"/>
    <property type="project" value="UniProtKB-UniRule"/>
</dbReference>
<dbReference type="GO" id="GO:0008654">
    <property type="term" value="P:phospholipid biosynthetic process"/>
    <property type="evidence" value="ECO:0007669"/>
    <property type="project" value="UniProtKB-UniRule"/>
</dbReference>
<dbReference type="HAMAP" id="MF_01043">
    <property type="entry name" value="PlsY"/>
    <property type="match status" value="1"/>
</dbReference>
<dbReference type="InterPro" id="IPR003811">
    <property type="entry name" value="G3P_acylTferase_PlsY"/>
</dbReference>
<dbReference type="NCBIfam" id="TIGR00023">
    <property type="entry name" value="glycerol-3-phosphate 1-O-acyltransferase PlsY"/>
    <property type="match status" value="1"/>
</dbReference>
<dbReference type="PANTHER" id="PTHR30309:SF0">
    <property type="entry name" value="GLYCEROL-3-PHOSPHATE ACYLTRANSFERASE-RELATED"/>
    <property type="match status" value="1"/>
</dbReference>
<dbReference type="PANTHER" id="PTHR30309">
    <property type="entry name" value="INNER MEMBRANE PROTEIN YGIH"/>
    <property type="match status" value="1"/>
</dbReference>
<dbReference type="Pfam" id="PF02660">
    <property type="entry name" value="G3P_acyltransf"/>
    <property type="match status" value="1"/>
</dbReference>
<dbReference type="SMART" id="SM01207">
    <property type="entry name" value="G3P_acyltransf"/>
    <property type="match status" value="1"/>
</dbReference>
<keyword id="KW-1003">Cell membrane</keyword>
<keyword id="KW-0444">Lipid biosynthesis</keyword>
<keyword id="KW-0443">Lipid metabolism</keyword>
<keyword id="KW-0472">Membrane</keyword>
<keyword id="KW-0594">Phospholipid biosynthesis</keyword>
<keyword id="KW-1208">Phospholipid metabolism</keyword>
<keyword id="KW-1185">Reference proteome</keyword>
<keyword id="KW-0808">Transferase</keyword>
<keyword id="KW-0812">Transmembrane</keyword>
<keyword id="KW-1133">Transmembrane helix</keyword>
<gene>
    <name evidence="1" type="primary">plsY</name>
    <name type="ordered locus">Exig_1149</name>
</gene>
<sequence length="206" mass="21933">MIEIIGILILGYLLGSIPFALLVGKWGHGIDIRQHGSGNLGTTNTFRVLGKKAGIIVLIGDLGKGAVASLVPILLASELHPLFAGLAAVVGHIYPVFARFKGGKAVATSGGMLLVTSPILFLVLLISFLTTLRLSRMVSLSSIVSASIGIVAAITIGIVEQDWIVPTFFTILALFVIFKHRENISRIRQGTESKIGMFAKDKKDTD</sequence>
<feature type="chain" id="PRO_1000213410" description="Glycerol-3-phosphate acyltransferase">
    <location>
        <begin position="1"/>
        <end position="206"/>
    </location>
</feature>
<feature type="transmembrane region" description="Helical" evidence="1">
    <location>
        <begin position="4"/>
        <end position="24"/>
    </location>
</feature>
<feature type="transmembrane region" description="Helical" evidence="1">
    <location>
        <begin position="55"/>
        <end position="75"/>
    </location>
</feature>
<feature type="transmembrane region" description="Helical" evidence="1">
    <location>
        <begin position="78"/>
        <end position="98"/>
    </location>
</feature>
<feature type="transmembrane region" description="Helical" evidence="1">
    <location>
        <begin position="112"/>
        <end position="132"/>
    </location>
</feature>
<feature type="transmembrane region" description="Helical" evidence="1">
    <location>
        <begin position="137"/>
        <end position="157"/>
    </location>
</feature>
<feature type="transmembrane region" description="Helical" evidence="1">
    <location>
        <begin position="158"/>
        <end position="178"/>
    </location>
</feature>